<accession>Q5M469</accession>
<feature type="chain" id="PRO_1000048305" description="Cytidylate kinase">
    <location>
        <begin position="1"/>
        <end position="226"/>
    </location>
</feature>
<feature type="binding site" evidence="1">
    <location>
        <begin position="10"/>
        <end position="18"/>
    </location>
    <ligand>
        <name>ATP</name>
        <dbReference type="ChEBI" id="CHEBI:30616"/>
    </ligand>
</feature>
<evidence type="ECO:0000255" key="1">
    <source>
        <dbReference type="HAMAP-Rule" id="MF_00238"/>
    </source>
</evidence>
<sequence>MKDIRIAIDGPASSGKSTVAKIIAKNLGYTYLDTGAMYRSATYLALQNGLTEENVPEILDQLSQNPISFGKAADGSPKVYVGDVDITHPIRDNQVTNNVSWVAAIPEVRQELVSQQQRIAQEGGIIMDGRDIGTVVLPDAELKIFMIASVDERAERRYKENIEKGIPADLETLKKEIAERDYKDSHREVSPLRPAEDAITFDTTGVSIDGVVEFIQEKAKKIIDKG</sequence>
<organism>
    <name type="scientific">Streptococcus thermophilus (strain ATCC BAA-250 / LMG 18311)</name>
    <dbReference type="NCBI Taxonomy" id="264199"/>
    <lineage>
        <taxon>Bacteria</taxon>
        <taxon>Bacillati</taxon>
        <taxon>Bacillota</taxon>
        <taxon>Bacilli</taxon>
        <taxon>Lactobacillales</taxon>
        <taxon>Streptococcaceae</taxon>
        <taxon>Streptococcus</taxon>
    </lineage>
</organism>
<protein>
    <recommendedName>
        <fullName evidence="1">Cytidylate kinase</fullName>
        <shortName evidence="1">CK</shortName>
        <ecNumber evidence="1">2.7.4.25</ecNumber>
    </recommendedName>
    <alternativeName>
        <fullName evidence="1">Cytidine monophosphate kinase</fullName>
        <shortName evidence="1">CMP kinase</shortName>
    </alternativeName>
</protein>
<reference key="1">
    <citation type="journal article" date="2004" name="Nat. Biotechnol.">
        <title>Complete sequence and comparative genome analysis of the dairy bacterium Streptococcus thermophilus.</title>
        <authorList>
            <person name="Bolotin A."/>
            <person name="Quinquis B."/>
            <person name="Renault P."/>
            <person name="Sorokin A."/>
            <person name="Ehrlich S.D."/>
            <person name="Kulakauskas S."/>
            <person name="Lapidus A."/>
            <person name="Goltsman E."/>
            <person name="Mazur M."/>
            <person name="Pusch G.D."/>
            <person name="Fonstein M."/>
            <person name="Overbeek R."/>
            <person name="Kyprides N."/>
            <person name="Purnelle B."/>
            <person name="Prozzi D."/>
            <person name="Ngui K."/>
            <person name="Masuy D."/>
            <person name="Hancy F."/>
            <person name="Burteau S."/>
            <person name="Boutry M."/>
            <person name="Delcour J."/>
            <person name="Goffeau A."/>
            <person name="Hols P."/>
        </authorList>
    </citation>
    <scope>NUCLEOTIDE SEQUENCE [LARGE SCALE GENOMIC DNA]</scope>
    <source>
        <strain>ATCC BAA-250 / LMG 18311</strain>
    </source>
</reference>
<dbReference type="EC" id="2.7.4.25" evidence="1"/>
<dbReference type="EMBL" id="CP000023">
    <property type="protein sequence ID" value="AAV60773.1"/>
    <property type="molecule type" value="Genomic_DNA"/>
</dbReference>
<dbReference type="RefSeq" id="WP_002950906.1">
    <property type="nucleotide sequence ID" value="NC_006448.1"/>
</dbReference>
<dbReference type="SMR" id="Q5M469"/>
<dbReference type="STRING" id="264199.stu1135"/>
<dbReference type="GeneID" id="66898931"/>
<dbReference type="KEGG" id="stl:stu1135"/>
<dbReference type="eggNOG" id="COG0283">
    <property type="taxonomic scope" value="Bacteria"/>
</dbReference>
<dbReference type="HOGENOM" id="CLU_079959_0_2_9"/>
<dbReference type="Proteomes" id="UP000001170">
    <property type="component" value="Chromosome"/>
</dbReference>
<dbReference type="GO" id="GO:0005829">
    <property type="term" value="C:cytosol"/>
    <property type="evidence" value="ECO:0007669"/>
    <property type="project" value="TreeGrafter"/>
</dbReference>
<dbReference type="GO" id="GO:0005524">
    <property type="term" value="F:ATP binding"/>
    <property type="evidence" value="ECO:0007669"/>
    <property type="project" value="UniProtKB-UniRule"/>
</dbReference>
<dbReference type="GO" id="GO:0036430">
    <property type="term" value="F:CMP kinase activity"/>
    <property type="evidence" value="ECO:0007669"/>
    <property type="project" value="RHEA"/>
</dbReference>
<dbReference type="GO" id="GO:0036431">
    <property type="term" value="F:dCMP kinase activity"/>
    <property type="evidence" value="ECO:0007669"/>
    <property type="project" value="RHEA"/>
</dbReference>
<dbReference type="GO" id="GO:0015949">
    <property type="term" value="P:nucleobase-containing small molecule interconversion"/>
    <property type="evidence" value="ECO:0007669"/>
    <property type="project" value="TreeGrafter"/>
</dbReference>
<dbReference type="GO" id="GO:0006220">
    <property type="term" value="P:pyrimidine nucleotide metabolic process"/>
    <property type="evidence" value="ECO:0007669"/>
    <property type="project" value="UniProtKB-UniRule"/>
</dbReference>
<dbReference type="CDD" id="cd02020">
    <property type="entry name" value="CMPK"/>
    <property type="match status" value="1"/>
</dbReference>
<dbReference type="FunFam" id="3.40.50.300:FF:000484">
    <property type="entry name" value="Cytidylate kinase"/>
    <property type="match status" value="1"/>
</dbReference>
<dbReference type="Gene3D" id="3.40.50.300">
    <property type="entry name" value="P-loop containing nucleotide triphosphate hydrolases"/>
    <property type="match status" value="1"/>
</dbReference>
<dbReference type="HAMAP" id="MF_00238">
    <property type="entry name" value="Cytidyl_kinase_type1"/>
    <property type="match status" value="1"/>
</dbReference>
<dbReference type="InterPro" id="IPR003136">
    <property type="entry name" value="Cytidylate_kin"/>
</dbReference>
<dbReference type="InterPro" id="IPR011994">
    <property type="entry name" value="Cytidylate_kinase_dom"/>
</dbReference>
<dbReference type="InterPro" id="IPR027417">
    <property type="entry name" value="P-loop_NTPase"/>
</dbReference>
<dbReference type="NCBIfam" id="TIGR00017">
    <property type="entry name" value="cmk"/>
    <property type="match status" value="1"/>
</dbReference>
<dbReference type="PANTHER" id="PTHR21299:SF2">
    <property type="entry name" value="CYTIDYLATE KINASE"/>
    <property type="match status" value="1"/>
</dbReference>
<dbReference type="PANTHER" id="PTHR21299">
    <property type="entry name" value="CYTIDYLATE KINASE/PANTOATE-BETA-ALANINE LIGASE"/>
    <property type="match status" value="1"/>
</dbReference>
<dbReference type="Pfam" id="PF02224">
    <property type="entry name" value="Cytidylate_kin"/>
    <property type="match status" value="1"/>
</dbReference>
<dbReference type="SUPFAM" id="SSF52540">
    <property type="entry name" value="P-loop containing nucleoside triphosphate hydrolases"/>
    <property type="match status" value="1"/>
</dbReference>
<proteinExistence type="inferred from homology"/>
<name>KCY_STRT2</name>
<gene>
    <name evidence="1" type="primary">cmk</name>
    <name type="ordered locus">stu1135</name>
</gene>
<comment type="catalytic activity">
    <reaction evidence="1">
        <text>CMP + ATP = CDP + ADP</text>
        <dbReference type="Rhea" id="RHEA:11600"/>
        <dbReference type="ChEBI" id="CHEBI:30616"/>
        <dbReference type="ChEBI" id="CHEBI:58069"/>
        <dbReference type="ChEBI" id="CHEBI:60377"/>
        <dbReference type="ChEBI" id="CHEBI:456216"/>
        <dbReference type="EC" id="2.7.4.25"/>
    </reaction>
</comment>
<comment type="catalytic activity">
    <reaction evidence="1">
        <text>dCMP + ATP = dCDP + ADP</text>
        <dbReference type="Rhea" id="RHEA:25094"/>
        <dbReference type="ChEBI" id="CHEBI:30616"/>
        <dbReference type="ChEBI" id="CHEBI:57566"/>
        <dbReference type="ChEBI" id="CHEBI:58593"/>
        <dbReference type="ChEBI" id="CHEBI:456216"/>
        <dbReference type="EC" id="2.7.4.25"/>
    </reaction>
</comment>
<comment type="subcellular location">
    <subcellularLocation>
        <location evidence="1">Cytoplasm</location>
    </subcellularLocation>
</comment>
<comment type="similarity">
    <text evidence="1">Belongs to the cytidylate kinase family. Type 1 subfamily.</text>
</comment>
<keyword id="KW-0067">ATP-binding</keyword>
<keyword id="KW-0963">Cytoplasm</keyword>
<keyword id="KW-0418">Kinase</keyword>
<keyword id="KW-0547">Nucleotide-binding</keyword>
<keyword id="KW-1185">Reference proteome</keyword>
<keyword id="KW-0808">Transferase</keyword>